<feature type="chain" id="PRO_1000017549" description="Large ribosomal subunit protein bL27">
    <location>
        <begin position="1"/>
        <end position="90"/>
    </location>
</feature>
<feature type="region of interest" description="Disordered" evidence="2">
    <location>
        <begin position="1"/>
        <end position="24"/>
    </location>
</feature>
<comment type="similarity">
    <text evidence="1">Belongs to the bacterial ribosomal protein bL27 family.</text>
</comment>
<name>RL27_PROM1</name>
<reference key="1">
    <citation type="journal article" date="2007" name="PLoS Genet.">
        <title>Patterns and implications of gene gain and loss in the evolution of Prochlorococcus.</title>
        <authorList>
            <person name="Kettler G.C."/>
            <person name="Martiny A.C."/>
            <person name="Huang K."/>
            <person name="Zucker J."/>
            <person name="Coleman M.L."/>
            <person name="Rodrigue S."/>
            <person name="Chen F."/>
            <person name="Lapidus A."/>
            <person name="Ferriera S."/>
            <person name="Johnson J."/>
            <person name="Steglich C."/>
            <person name="Church G.M."/>
            <person name="Richardson P."/>
            <person name="Chisholm S.W."/>
        </authorList>
    </citation>
    <scope>NUCLEOTIDE SEQUENCE [LARGE SCALE GENOMIC DNA]</scope>
    <source>
        <strain>NATL1A</strain>
    </source>
</reference>
<gene>
    <name evidence="1" type="primary">rpmA</name>
    <name evidence="1" type="synonym">rpl27</name>
    <name type="ordered locus">NATL1_17721</name>
</gene>
<keyword id="KW-0687">Ribonucleoprotein</keyword>
<keyword id="KW-0689">Ribosomal protein</keyword>
<accession>A2C4B8</accession>
<proteinExistence type="inferred from homology"/>
<sequence>MAHKKGTGSTRNGRDSNSKRLGVKAYGGEKVTAGSILIRQRGTSVLPGINVGRGKDDTLFALTDGSVHFESIRRGLRNRKRINISTAKAV</sequence>
<protein>
    <recommendedName>
        <fullName evidence="1">Large ribosomal subunit protein bL27</fullName>
    </recommendedName>
    <alternativeName>
        <fullName evidence="3">50S ribosomal protein L27</fullName>
    </alternativeName>
</protein>
<organism>
    <name type="scientific">Prochlorococcus marinus (strain NATL1A)</name>
    <dbReference type="NCBI Taxonomy" id="167555"/>
    <lineage>
        <taxon>Bacteria</taxon>
        <taxon>Bacillati</taxon>
        <taxon>Cyanobacteriota</taxon>
        <taxon>Cyanophyceae</taxon>
        <taxon>Synechococcales</taxon>
        <taxon>Prochlorococcaceae</taxon>
        <taxon>Prochlorococcus</taxon>
    </lineage>
</organism>
<dbReference type="EMBL" id="CP000553">
    <property type="protein sequence ID" value="ABM76328.1"/>
    <property type="molecule type" value="Genomic_DNA"/>
</dbReference>
<dbReference type="RefSeq" id="WP_011295264.1">
    <property type="nucleotide sequence ID" value="NC_008819.1"/>
</dbReference>
<dbReference type="SMR" id="A2C4B8"/>
<dbReference type="KEGG" id="pme:NATL1_17721"/>
<dbReference type="eggNOG" id="COG0211">
    <property type="taxonomic scope" value="Bacteria"/>
</dbReference>
<dbReference type="HOGENOM" id="CLU_095424_4_0_3"/>
<dbReference type="Proteomes" id="UP000002592">
    <property type="component" value="Chromosome"/>
</dbReference>
<dbReference type="GO" id="GO:0022625">
    <property type="term" value="C:cytosolic large ribosomal subunit"/>
    <property type="evidence" value="ECO:0007669"/>
    <property type="project" value="TreeGrafter"/>
</dbReference>
<dbReference type="GO" id="GO:0003735">
    <property type="term" value="F:structural constituent of ribosome"/>
    <property type="evidence" value="ECO:0007669"/>
    <property type="project" value="InterPro"/>
</dbReference>
<dbReference type="GO" id="GO:0006412">
    <property type="term" value="P:translation"/>
    <property type="evidence" value="ECO:0007669"/>
    <property type="project" value="UniProtKB-UniRule"/>
</dbReference>
<dbReference type="FunFam" id="2.40.50.100:FF:000020">
    <property type="entry name" value="50S ribosomal protein L27"/>
    <property type="match status" value="1"/>
</dbReference>
<dbReference type="Gene3D" id="2.40.50.100">
    <property type="match status" value="1"/>
</dbReference>
<dbReference type="HAMAP" id="MF_00539">
    <property type="entry name" value="Ribosomal_bL27"/>
    <property type="match status" value="1"/>
</dbReference>
<dbReference type="InterPro" id="IPR001684">
    <property type="entry name" value="Ribosomal_bL27"/>
</dbReference>
<dbReference type="InterPro" id="IPR018261">
    <property type="entry name" value="Ribosomal_bL27_CS"/>
</dbReference>
<dbReference type="NCBIfam" id="TIGR00062">
    <property type="entry name" value="L27"/>
    <property type="match status" value="1"/>
</dbReference>
<dbReference type="PANTHER" id="PTHR15893:SF0">
    <property type="entry name" value="LARGE RIBOSOMAL SUBUNIT PROTEIN BL27M"/>
    <property type="match status" value="1"/>
</dbReference>
<dbReference type="PANTHER" id="PTHR15893">
    <property type="entry name" value="RIBOSOMAL PROTEIN L27"/>
    <property type="match status" value="1"/>
</dbReference>
<dbReference type="Pfam" id="PF01016">
    <property type="entry name" value="Ribosomal_L27"/>
    <property type="match status" value="1"/>
</dbReference>
<dbReference type="PRINTS" id="PR00063">
    <property type="entry name" value="RIBOSOMALL27"/>
</dbReference>
<dbReference type="SUPFAM" id="SSF110324">
    <property type="entry name" value="Ribosomal L27 protein-like"/>
    <property type="match status" value="1"/>
</dbReference>
<dbReference type="PROSITE" id="PS00831">
    <property type="entry name" value="RIBOSOMAL_L27"/>
    <property type="match status" value="1"/>
</dbReference>
<evidence type="ECO:0000255" key="1">
    <source>
        <dbReference type="HAMAP-Rule" id="MF_00539"/>
    </source>
</evidence>
<evidence type="ECO:0000256" key="2">
    <source>
        <dbReference type="SAM" id="MobiDB-lite"/>
    </source>
</evidence>
<evidence type="ECO:0000305" key="3"/>